<gene>
    <name type="primary">Tdp1</name>
</gene>
<accession>Q4G056</accession>
<organism>
    <name type="scientific">Rattus norvegicus</name>
    <name type="common">Rat</name>
    <dbReference type="NCBI Taxonomy" id="10116"/>
    <lineage>
        <taxon>Eukaryota</taxon>
        <taxon>Metazoa</taxon>
        <taxon>Chordata</taxon>
        <taxon>Craniata</taxon>
        <taxon>Vertebrata</taxon>
        <taxon>Euteleostomi</taxon>
        <taxon>Mammalia</taxon>
        <taxon>Eutheria</taxon>
        <taxon>Euarchontoglires</taxon>
        <taxon>Glires</taxon>
        <taxon>Rodentia</taxon>
        <taxon>Myomorpha</taxon>
        <taxon>Muroidea</taxon>
        <taxon>Muridae</taxon>
        <taxon>Murinae</taxon>
        <taxon>Rattus</taxon>
    </lineage>
</organism>
<keyword id="KW-0963">Cytoplasm</keyword>
<keyword id="KW-0227">DNA damage</keyword>
<keyword id="KW-0234">DNA repair</keyword>
<keyword id="KW-0269">Exonuclease</keyword>
<keyword id="KW-0378">Hydrolase</keyword>
<keyword id="KW-0540">Nuclease</keyword>
<keyword id="KW-0539">Nucleus</keyword>
<keyword id="KW-0597">Phosphoprotein</keyword>
<keyword id="KW-1185">Reference proteome</keyword>
<keyword id="KW-0677">Repeat</keyword>
<comment type="function">
    <text evidence="2">DNA repair enzyme that can remove a variety of covalent adducts from DNA through hydrolysis of a 3'-phosphodiester bond, giving rise to DNA with a free 3' phosphate. Catalyzes the hydrolysis of dead-end complexes between DNA and the topoisomerase I active site tyrosine residue. Hydrolyzes 3'-phosphoglycolates on protruding 3' ends on DNA double-strand breaks due to DNA damage by radiation and free radicals. Acts on blunt-ended double-strand DNA breaks and on single-stranded DNA. Has low 3'exonuclease activity and can remove a single nucleoside from the 3'end of DNA and RNA molecules with 3'hydroxyl groups. Has no exonuclease activity towards DNA or RNA with a 3'phosphate (By similarity).</text>
</comment>
<comment type="subunit">
    <text evidence="2">Monomer.</text>
</comment>
<comment type="subcellular location">
    <subcellularLocation>
        <location evidence="2">Nucleus</location>
    </subcellularLocation>
    <subcellularLocation>
        <location evidence="2">Cytoplasm</location>
    </subcellularLocation>
</comment>
<comment type="similarity">
    <text evidence="4">Belongs to the tyrosyl-DNA phosphodiesterase family.</text>
</comment>
<protein>
    <recommendedName>
        <fullName>Tyrosyl-DNA phosphodiesterase 1</fullName>
        <shortName>Tyr-DNA phosphodiesterase 1</shortName>
        <ecNumber evidence="2">3.1.4.-</ecNumber>
    </recommendedName>
</protein>
<name>TYDP1_RAT</name>
<feature type="chain" id="PRO_0000340098" description="Tyrosyl-DNA phosphodiesterase 1">
    <location>
        <begin position="1"/>
        <end position="609"/>
    </location>
</feature>
<feature type="region of interest" description="Disordered" evidence="3">
    <location>
        <begin position="1"/>
        <end position="154"/>
    </location>
</feature>
<feature type="region of interest" description="Interaction with DNA" evidence="2">
    <location>
        <begin position="401"/>
        <end position="404"/>
    </location>
</feature>
<feature type="compositionally biased region" description="Polar residues" evidence="3">
    <location>
        <begin position="1"/>
        <end position="12"/>
    </location>
</feature>
<feature type="compositionally biased region" description="Basic and acidic residues" evidence="3">
    <location>
        <begin position="127"/>
        <end position="143"/>
    </location>
</feature>
<feature type="active site" description="Nucleophile" evidence="2">
    <location>
        <position position="264"/>
    </location>
</feature>
<feature type="active site" description="Proton donor/acceptor" evidence="2">
    <location>
        <position position="494"/>
    </location>
</feature>
<feature type="binding site" evidence="2">
    <location>
        <position position="266"/>
    </location>
    <ligand>
        <name>substrate</name>
    </ligand>
</feature>
<feature type="binding site" evidence="2">
    <location>
        <position position="496"/>
    </location>
    <ligand>
        <name>substrate</name>
    </ligand>
</feature>
<feature type="site" description="Interaction with DNA" evidence="2">
    <location>
        <position position="519"/>
    </location>
</feature>
<feature type="modified residue" description="Phosphoserine" evidence="2">
    <location>
        <position position="61"/>
    </location>
</feature>
<feature type="modified residue" description="Phosphoserine" evidence="1">
    <location>
        <position position="119"/>
    </location>
</feature>
<feature type="modified residue" description="Phosphoserine" evidence="5">
    <location>
        <position position="132"/>
    </location>
</feature>
<feature type="modified residue" description="Phosphothreonine" evidence="5">
    <location>
        <position position="148"/>
    </location>
</feature>
<feature type="modified residue" description="Phosphoserine" evidence="5">
    <location>
        <position position="149"/>
    </location>
</feature>
<evidence type="ECO:0000250" key="1">
    <source>
        <dbReference type="UniProtKB" id="Q8BJ37"/>
    </source>
</evidence>
<evidence type="ECO:0000250" key="2">
    <source>
        <dbReference type="UniProtKB" id="Q9NUW8"/>
    </source>
</evidence>
<evidence type="ECO:0000256" key="3">
    <source>
        <dbReference type="SAM" id="MobiDB-lite"/>
    </source>
</evidence>
<evidence type="ECO:0000305" key="4"/>
<evidence type="ECO:0007744" key="5">
    <source>
    </source>
</evidence>
<reference key="1">
    <citation type="journal article" date="2004" name="Genome Res.">
        <title>The status, quality, and expansion of the NIH full-length cDNA project: the Mammalian Gene Collection (MGC).</title>
        <authorList>
            <consortium name="The MGC Project Team"/>
        </authorList>
    </citation>
    <scope>NUCLEOTIDE SEQUENCE [LARGE SCALE MRNA]</scope>
    <source>
        <tissue>Thymus</tissue>
    </source>
</reference>
<reference key="2">
    <citation type="journal article" date="2012" name="Nat. Commun.">
        <title>Quantitative maps of protein phosphorylation sites across 14 different rat organs and tissues.</title>
        <authorList>
            <person name="Lundby A."/>
            <person name="Secher A."/>
            <person name="Lage K."/>
            <person name="Nordsborg N.B."/>
            <person name="Dmytriyev A."/>
            <person name="Lundby C."/>
            <person name="Olsen J.V."/>
        </authorList>
    </citation>
    <scope>PHOSPHORYLATION [LARGE SCALE ANALYSIS] AT SER-132; THR-148 AND SER-149</scope>
    <scope>IDENTIFICATION BY MASS SPECTROMETRY [LARGE SCALE ANALYSIS]</scope>
</reference>
<sequence>MSQESSYGKWTISSSDDSEDEKPKPVKPSTSSGPQAGQGVSKEPTYTCSEARKAAHKRQISPVKFNNTDSVLPHKKQKMDSPEGLGWCLSSSDDEQQPDVTQQEQPKGVPPQEKKYAPSANVTTAQKVEDRSPPDSHRAQRADEEYETSGEGQDIWDMLDKENPFQFYLTRVSGIKAKYNSKALHIKDILSPLFGTLVSSAQFNYCFDVNWLIKQYPPEFRKKPILLVHGDKREAKADLHAQAKPYANISLCQAKLDIAFGTHHTKMMLLLYEEGLRVVIHTSNLIREDWHQKTQGIWLSPLYPRIYQGNHTSGESSTHFKADLTSYLMAYNAPPLQEWIDIIQEHDLSETNVYLIGSTPGRFQGSHKDNWGHFRLRKLLQAHAPSAPRGECWPVVGQFSSIGSLGPDESKWLCSEFKESLLAVREEGRTPGRSAVPLHLIYPSVENVRTSLEGYPAGGSLPYGIQTAEKQRWLHPYFHKWSAETSGRSNAMPHIKTYMRPSPDFSKLAWFLVTSANLSKAAWGALEKNGAQLMIRSYELGVLFLPSAFGLDTFKVKQKFFSSSSEPMASFPVPYDLPPELYGSKDRPWIWNIPYVKAPDTHGNMWVPS</sequence>
<proteinExistence type="evidence at protein level"/>
<dbReference type="EC" id="3.1.4.-" evidence="2"/>
<dbReference type="EMBL" id="BC098739">
    <property type="protein sequence ID" value="AAH98739.1"/>
    <property type="molecule type" value="mRNA"/>
</dbReference>
<dbReference type="RefSeq" id="NP_001026827.1">
    <property type="nucleotide sequence ID" value="NM_001031657.1"/>
</dbReference>
<dbReference type="SMR" id="Q4G056"/>
<dbReference type="FunCoup" id="Q4G056">
    <property type="interactions" value="2475"/>
</dbReference>
<dbReference type="STRING" id="10116.ENSRNOP00000005167"/>
<dbReference type="GlyGen" id="Q4G056">
    <property type="glycosylation" value="1 site"/>
</dbReference>
<dbReference type="iPTMnet" id="Q4G056"/>
<dbReference type="PhosphoSitePlus" id="Q4G056"/>
<dbReference type="PaxDb" id="10116-ENSRNOP00000005167"/>
<dbReference type="GeneID" id="314380"/>
<dbReference type="KEGG" id="rno:314380"/>
<dbReference type="UCSC" id="RGD:1309618">
    <property type="organism name" value="rat"/>
</dbReference>
<dbReference type="AGR" id="RGD:1309618"/>
<dbReference type="CTD" id="55775"/>
<dbReference type="RGD" id="1309618">
    <property type="gene designation" value="Tdp1"/>
</dbReference>
<dbReference type="eggNOG" id="KOG2031">
    <property type="taxonomic scope" value="Eukaryota"/>
</dbReference>
<dbReference type="HOGENOM" id="CLU_010413_4_0_1"/>
<dbReference type="InParanoid" id="Q4G056"/>
<dbReference type="OrthoDB" id="47785at2759"/>
<dbReference type="PhylomeDB" id="Q4G056"/>
<dbReference type="TreeFam" id="TF105989"/>
<dbReference type="BRENDA" id="3.1.4.1">
    <property type="organism ID" value="5301"/>
</dbReference>
<dbReference type="Reactome" id="R-RNO-5693571">
    <property type="pathway name" value="Nonhomologous End-Joining (NHEJ)"/>
</dbReference>
<dbReference type="PRO" id="PR:Q4G056"/>
<dbReference type="Proteomes" id="UP000002494">
    <property type="component" value="Unplaced"/>
</dbReference>
<dbReference type="GO" id="GO:0005737">
    <property type="term" value="C:cytoplasm"/>
    <property type="evidence" value="ECO:0000266"/>
    <property type="project" value="RGD"/>
</dbReference>
<dbReference type="GO" id="GO:0005634">
    <property type="term" value="C:nucleus"/>
    <property type="evidence" value="ECO:0000266"/>
    <property type="project" value="RGD"/>
</dbReference>
<dbReference type="GO" id="GO:0017005">
    <property type="term" value="F:3'-tyrosyl-DNA phosphodiesterase activity"/>
    <property type="evidence" value="ECO:0000250"/>
    <property type="project" value="UniProtKB"/>
</dbReference>
<dbReference type="GO" id="GO:0003690">
    <property type="term" value="F:double-stranded DNA binding"/>
    <property type="evidence" value="ECO:0000266"/>
    <property type="project" value="RGD"/>
</dbReference>
<dbReference type="GO" id="GO:0004527">
    <property type="term" value="F:exonuclease activity"/>
    <property type="evidence" value="ECO:0007669"/>
    <property type="project" value="UniProtKB-KW"/>
</dbReference>
<dbReference type="GO" id="GO:0003697">
    <property type="term" value="F:single-stranded DNA binding"/>
    <property type="evidence" value="ECO:0000266"/>
    <property type="project" value="RGD"/>
</dbReference>
<dbReference type="GO" id="GO:0006281">
    <property type="term" value="P:DNA repair"/>
    <property type="evidence" value="ECO:0000266"/>
    <property type="project" value="RGD"/>
</dbReference>
<dbReference type="GO" id="GO:0006302">
    <property type="term" value="P:double-strand break repair"/>
    <property type="evidence" value="ECO:0000266"/>
    <property type="project" value="RGD"/>
</dbReference>
<dbReference type="GO" id="GO:0000012">
    <property type="term" value="P:single strand break repair"/>
    <property type="evidence" value="ECO:0000266"/>
    <property type="project" value="RGD"/>
</dbReference>
<dbReference type="CDD" id="cd09193">
    <property type="entry name" value="PLDc_mTdp1_1"/>
    <property type="match status" value="1"/>
</dbReference>
<dbReference type="CDD" id="cd09195">
    <property type="entry name" value="PLDc_mTdp1_2"/>
    <property type="match status" value="1"/>
</dbReference>
<dbReference type="FunFam" id="3.30.870.10:FF:000012">
    <property type="entry name" value="Tyrosyl-DNA phosphodiesterase 1"/>
    <property type="match status" value="1"/>
</dbReference>
<dbReference type="FunFam" id="3.30.870.10:FF:000020">
    <property type="entry name" value="Tyrosyl-DNA phosphodiesterase 1"/>
    <property type="match status" value="1"/>
</dbReference>
<dbReference type="Gene3D" id="3.30.870.10">
    <property type="entry name" value="Endonuclease Chain A"/>
    <property type="match status" value="2"/>
</dbReference>
<dbReference type="InterPro" id="IPR010347">
    <property type="entry name" value="Tdp1"/>
</dbReference>
<dbReference type="PANTHER" id="PTHR12415">
    <property type="entry name" value="TYROSYL-DNA PHOSPHODIESTERASE 1"/>
    <property type="match status" value="1"/>
</dbReference>
<dbReference type="PANTHER" id="PTHR12415:SF0">
    <property type="entry name" value="TYROSYL-DNA PHOSPHODIESTERASE 1"/>
    <property type="match status" value="1"/>
</dbReference>
<dbReference type="Pfam" id="PF06087">
    <property type="entry name" value="Tyr-DNA_phospho"/>
    <property type="match status" value="1"/>
</dbReference>
<dbReference type="SUPFAM" id="SSF56024">
    <property type="entry name" value="Phospholipase D/nuclease"/>
    <property type="match status" value="2"/>
</dbReference>